<gene>
    <name evidence="1" type="primary">clpS</name>
    <name type="ordered locus">syc0839_d</name>
</gene>
<comment type="function">
    <text evidence="1">Involved in the modulation of the specificity of the ClpAP-mediated ATP-dependent protein degradation.</text>
</comment>
<comment type="subunit">
    <text evidence="1">Binds to the N-terminal domain of the chaperone ClpA.</text>
</comment>
<comment type="similarity">
    <text evidence="1">Belongs to the ClpS family.</text>
</comment>
<name>CLPS_SYNP6</name>
<reference key="1">
    <citation type="journal article" date="2007" name="Photosyn. Res.">
        <title>Complete nucleotide sequence of the freshwater unicellular cyanobacterium Synechococcus elongatus PCC 6301 chromosome: gene content and organization.</title>
        <authorList>
            <person name="Sugita C."/>
            <person name="Ogata K."/>
            <person name="Shikata M."/>
            <person name="Jikuya H."/>
            <person name="Takano J."/>
            <person name="Furumichi M."/>
            <person name="Kanehisa M."/>
            <person name="Omata T."/>
            <person name="Sugiura M."/>
            <person name="Sugita M."/>
        </authorList>
    </citation>
    <scope>NUCLEOTIDE SEQUENCE [LARGE SCALE GENOMIC DNA]</scope>
    <source>
        <strain>ATCC 27144 / PCC 6301 / SAUG 1402/1</strain>
    </source>
</reference>
<protein>
    <recommendedName>
        <fullName evidence="1">ATP-dependent Clp protease adapter protein ClpS</fullName>
    </recommendedName>
</protein>
<sequence length="91" mass="10402">MAVETIQKPETTTKRKIAPRYRVLLHNDDFNPMEYVVMVLMQTVPSLTQPQAVDIMMEAHTNGTGLVITCDIEPAEFYCEQLKSHGLEQQH</sequence>
<accession>Q5N3U1</accession>
<proteinExistence type="inferred from homology"/>
<evidence type="ECO:0000255" key="1">
    <source>
        <dbReference type="HAMAP-Rule" id="MF_00302"/>
    </source>
</evidence>
<feature type="chain" id="PRO_1000115483" description="ATP-dependent Clp protease adapter protein ClpS">
    <location>
        <begin position="1"/>
        <end position="91"/>
    </location>
</feature>
<dbReference type="EMBL" id="AP008231">
    <property type="protein sequence ID" value="BAD79029.1"/>
    <property type="molecule type" value="Genomic_DNA"/>
</dbReference>
<dbReference type="SMR" id="Q5N3U1"/>
<dbReference type="KEGG" id="syc:syc0839_d"/>
<dbReference type="eggNOG" id="COG2127">
    <property type="taxonomic scope" value="Bacteria"/>
</dbReference>
<dbReference type="Proteomes" id="UP000001175">
    <property type="component" value="Chromosome"/>
</dbReference>
<dbReference type="GO" id="GO:0030163">
    <property type="term" value="P:protein catabolic process"/>
    <property type="evidence" value="ECO:0007669"/>
    <property type="project" value="InterPro"/>
</dbReference>
<dbReference type="GO" id="GO:0006508">
    <property type="term" value="P:proteolysis"/>
    <property type="evidence" value="ECO:0007669"/>
    <property type="project" value="UniProtKB-UniRule"/>
</dbReference>
<dbReference type="Gene3D" id="3.30.1390.10">
    <property type="match status" value="1"/>
</dbReference>
<dbReference type="HAMAP" id="MF_00302">
    <property type="entry name" value="ClpS"/>
    <property type="match status" value="1"/>
</dbReference>
<dbReference type="InterPro" id="IPR022935">
    <property type="entry name" value="ClpS"/>
</dbReference>
<dbReference type="InterPro" id="IPR003769">
    <property type="entry name" value="ClpS_core"/>
</dbReference>
<dbReference type="InterPro" id="IPR014719">
    <property type="entry name" value="Ribosomal_bL12_C/ClpS-like"/>
</dbReference>
<dbReference type="NCBIfam" id="NF000671">
    <property type="entry name" value="PRK00033.1-4"/>
    <property type="match status" value="1"/>
</dbReference>
<dbReference type="PANTHER" id="PTHR33473:SF19">
    <property type="entry name" value="ATP-DEPENDENT CLP PROTEASE ADAPTER PROTEIN CLPS"/>
    <property type="match status" value="1"/>
</dbReference>
<dbReference type="PANTHER" id="PTHR33473">
    <property type="entry name" value="ATP-DEPENDENT CLP PROTEASE ADAPTER PROTEIN CLPS1, CHLOROPLASTIC"/>
    <property type="match status" value="1"/>
</dbReference>
<dbReference type="Pfam" id="PF02617">
    <property type="entry name" value="ClpS"/>
    <property type="match status" value="1"/>
</dbReference>
<dbReference type="SUPFAM" id="SSF54736">
    <property type="entry name" value="ClpS-like"/>
    <property type="match status" value="1"/>
</dbReference>
<organism>
    <name type="scientific">Synechococcus sp. (strain ATCC 27144 / PCC 6301 / SAUG 1402/1)</name>
    <name type="common">Anacystis nidulans</name>
    <dbReference type="NCBI Taxonomy" id="269084"/>
    <lineage>
        <taxon>Bacteria</taxon>
        <taxon>Bacillati</taxon>
        <taxon>Cyanobacteriota</taxon>
        <taxon>Cyanophyceae</taxon>
        <taxon>Synechococcales</taxon>
        <taxon>Synechococcaceae</taxon>
        <taxon>Synechococcus</taxon>
    </lineage>
</organism>